<accession>Q8IXL9</accession>
<protein>
    <recommendedName>
        <fullName>IQ domain-containing protein F2</fullName>
    </recommendedName>
</protein>
<keyword id="KW-1185">Reference proteome</keyword>
<keyword id="KW-0677">Repeat</keyword>
<reference key="1">
    <citation type="journal article" date="2004" name="Genome Res.">
        <title>The status, quality, and expansion of the NIH full-length cDNA project: the Mammalian Gene Collection (MGC).</title>
        <authorList>
            <consortium name="The MGC Project Team"/>
        </authorList>
    </citation>
    <scope>NUCLEOTIDE SEQUENCE [LARGE SCALE MRNA]</scope>
    <source>
        <tissue>Brain</tissue>
    </source>
</reference>
<feature type="chain" id="PRO_0000282559" description="IQ domain-containing protein F2">
    <location>
        <begin position="1"/>
        <end position="164"/>
    </location>
</feature>
<feature type="domain" description="IQ 1" evidence="1">
    <location>
        <begin position="43"/>
        <end position="72"/>
    </location>
</feature>
<feature type="domain" description="IQ 2" evidence="1">
    <location>
        <begin position="99"/>
        <end position="128"/>
    </location>
</feature>
<name>IQCF2_HUMAN</name>
<comment type="interaction">
    <interactant intactId="EBI-10238842">
        <id>Q8IXL9</id>
    </interactant>
    <interactant intactId="EBI-747754">
        <id>P28799</id>
        <label>GRN</label>
    </interactant>
    <organismsDiffer>false</organismsDiffer>
    <experiments>3</experiments>
</comment>
<comment type="interaction">
    <interactant intactId="EBI-10238842">
        <id>Q8IXL9</id>
    </interactant>
    <interactant intactId="EBI-10975473">
        <id>O60333-2</id>
        <label>KIF1B</label>
    </interactant>
    <organismsDiffer>false</organismsDiffer>
    <experiments>3</experiments>
</comment>
<comment type="interaction">
    <interactant intactId="EBI-10238842">
        <id>Q8IXL9</id>
    </interactant>
    <interactant intactId="EBI-2341787">
        <id>Q17RB8</id>
        <label>LONRF1</label>
    </interactant>
    <organismsDiffer>false</organismsDiffer>
    <experiments>3</experiments>
</comment>
<comment type="interaction">
    <interactant intactId="EBI-10238842">
        <id>Q8IXL9</id>
    </interactant>
    <interactant intactId="EBI-749195">
        <id>P60891</id>
        <label>PRPS1</label>
    </interactant>
    <organismsDiffer>false</organismsDiffer>
    <experiments>3</experiments>
</comment>
<comment type="interaction">
    <interactant intactId="EBI-10238842">
        <id>Q8IXL9</id>
    </interactant>
    <interactant intactId="EBI-396669">
        <id>Q9Y3C5</id>
        <label>RNF11</label>
    </interactant>
    <organismsDiffer>false</organismsDiffer>
    <experiments>3</experiments>
</comment>
<comment type="interaction">
    <interactant intactId="EBI-10238842">
        <id>Q8IXL9</id>
    </interactant>
    <interactant intactId="EBI-720609">
        <id>O76024</id>
        <label>WFS1</label>
    </interactant>
    <organismsDiffer>false</organismsDiffer>
    <experiments>3</experiments>
</comment>
<organism>
    <name type="scientific">Homo sapiens</name>
    <name type="common">Human</name>
    <dbReference type="NCBI Taxonomy" id="9606"/>
    <lineage>
        <taxon>Eukaryota</taxon>
        <taxon>Metazoa</taxon>
        <taxon>Chordata</taxon>
        <taxon>Craniata</taxon>
        <taxon>Vertebrata</taxon>
        <taxon>Euteleostomi</taxon>
        <taxon>Mammalia</taxon>
        <taxon>Eutheria</taxon>
        <taxon>Euarchontoglires</taxon>
        <taxon>Primates</taxon>
        <taxon>Haplorrhini</taxon>
        <taxon>Catarrhini</taxon>
        <taxon>Hominidae</taxon>
        <taxon>Homo</taxon>
    </lineage>
</organism>
<gene>
    <name type="primary">IQCF2</name>
</gene>
<dbReference type="EMBL" id="BC040047">
    <property type="protein sequence ID" value="AAH40047.1"/>
    <property type="molecule type" value="mRNA"/>
</dbReference>
<dbReference type="CCDS" id="CCDS2835.1"/>
<dbReference type="RefSeq" id="NP_982248.1">
    <property type="nucleotide sequence ID" value="NM_203424.2"/>
</dbReference>
<dbReference type="SMR" id="Q8IXL9"/>
<dbReference type="BioGRID" id="132986">
    <property type="interactions" value="31"/>
</dbReference>
<dbReference type="FunCoup" id="Q8IXL9">
    <property type="interactions" value="2"/>
</dbReference>
<dbReference type="IntAct" id="Q8IXL9">
    <property type="interactions" value="27"/>
</dbReference>
<dbReference type="STRING" id="9606.ENSP00000329904"/>
<dbReference type="iPTMnet" id="Q8IXL9"/>
<dbReference type="PhosphoSitePlus" id="Q8IXL9"/>
<dbReference type="BioMuta" id="IQCF2"/>
<dbReference type="DMDM" id="74728210"/>
<dbReference type="MassIVE" id="Q8IXL9"/>
<dbReference type="PaxDb" id="9606-ENSP00000329904"/>
<dbReference type="PeptideAtlas" id="Q8IXL9"/>
<dbReference type="ProteomicsDB" id="71026"/>
<dbReference type="Antibodypedia" id="76253">
    <property type="antibodies" value="31 antibodies from 9 providers"/>
</dbReference>
<dbReference type="DNASU" id="389123"/>
<dbReference type="Ensembl" id="ENST00000333127.4">
    <property type="protein sequence ID" value="ENSP00000329904.3"/>
    <property type="gene ID" value="ENSG00000184345.5"/>
</dbReference>
<dbReference type="GeneID" id="389123"/>
<dbReference type="KEGG" id="hsa:389123"/>
<dbReference type="MANE-Select" id="ENST00000333127.4">
    <property type="protein sequence ID" value="ENSP00000329904.3"/>
    <property type="RefSeq nucleotide sequence ID" value="NM_203424.2"/>
    <property type="RefSeq protein sequence ID" value="NP_982248.1"/>
</dbReference>
<dbReference type="UCSC" id="uc003dbt.2">
    <property type="organism name" value="human"/>
</dbReference>
<dbReference type="AGR" id="HGNC:31815"/>
<dbReference type="CTD" id="389123"/>
<dbReference type="GeneCards" id="IQCF2"/>
<dbReference type="HGNC" id="HGNC:31815">
    <property type="gene designation" value="IQCF2"/>
</dbReference>
<dbReference type="HPA" id="ENSG00000184345">
    <property type="expression patterns" value="Tissue enriched (testis)"/>
</dbReference>
<dbReference type="neXtProt" id="NX_Q8IXL9"/>
<dbReference type="OpenTargets" id="ENSG00000184345"/>
<dbReference type="PharmGKB" id="PA134900355"/>
<dbReference type="VEuPathDB" id="HostDB:ENSG00000184345"/>
<dbReference type="eggNOG" id="ENOG502SR3N">
    <property type="taxonomic scope" value="Eukaryota"/>
</dbReference>
<dbReference type="GeneTree" id="ENSGT00390000004641"/>
<dbReference type="HOGENOM" id="CLU_114989_2_0_1"/>
<dbReference type="InParanoid" id="Q8IXL9"/>
<dbReference type="OMA" id="WWRMTLL"/>
<dbReference type="OrthoDB" id="9821394at2759"/>
<dbReference type="PAN-GO" id="Q8IXL9">
    <property type="GO annotations" value="1 GO annotation based on evolutionary models"/>
</dbReference>
<dbReference type="PhylomeDB" id="Q8IXL9"/>
<dbReference type="TreeFam" id="TF337908"/>
<dbReference type="PathwayCommons" id="Q8IXL9"/>
<dbReference type="SignaLink" id="Q8IXL9"/>
<dbReference type="BioGRID-ORCS" id="389123">
    <property type="hits" value="10 hits in 1137 CRISPR screens"/>
</dbReference>
<dbReference type="GenomeRNAi" id="389123"/>
<dbReference type="Pharos" id="Q8IXL9">
    <property type="development level" value="Tdark"/>
</dbReference>
<dbReference type="PRO" id="PR:Q8IXL9"/>
<dbReference type="Proteomes" id="UP000005640">
    <property type="component" value="Chromosome 3"/>
</dbReference>
<dbReference type="RNAct" id="Q8IXL9">
    <property type="molecule type" value="protein"/>
</dbReference>
<dbReference type="Bgee" id="ENSG00000184345">
    <property type="expression patterns" value="Expressed in left testis and 43 other cell types or tissues"/>
</dbReference>
<dbReference type="GO" id="GO:0005516">
    <property type="term" value="F:calmodulin binding"/>
    <property type="evidence" value="ECO:0000318"/>
    <property type="project" value="GO_Central"/>
</dbReference>
<dbReference type="FunFam" id="1.20.5.190:FF:000014">
    <property type="entry name" value="IQ motif containing F5"/>
    <property type="match status" value="1"/>
</dbReference>
<dbReference type="FunFam" id="1.20.5.190:FF:000015">
    <property type="entry name" value="IQ motif containing F5"/>
    <property type="match status" value="1"/>
</dbReference>
<dbReference type="Gene3D" id="1.20.5.190">
    <property type="match status" value="2"/>
</dbReference>
<dbReference type="InterPro" id="IPR000048">
    <property type="entry name" value="IQ_motif_EF-hand-BS"/>
</dbReference>
<dbReference type="InterPro" id="IPR039887">
    <property type="entry name" value="IQCF"/>
</dbReference>
<dbReference type="PANTHER" id="PTHR21633:SF4">
    <property type="entry name" value="IQ DOMAIN-CONTAINING PROTEIN F2"/>
    <property type="match status" value="1"/>
</dbReference>
<dbReference type="PANTHER" id="PTHR21633">
    <property type="entry name" value="IQ MOTIF CONTAINING F"/>
    <property type="match status" value="1"/>
</dbReference>
<dbReference type="Pfam" id="PF00612">
    <property type="entry name" value="IQ"/>
    <property type="match status" value="3"/>
</dbReference>
<dbReference type="SMART" id="SM00015">
    <property type="entry name" value="IQ"/>
    <property type="match status" value="3"/>
</dbReference>
<dbReference type="PROSITE" id="PS50096">
    <property type="entry name" value="IQ"/>
    <property type="match status" value="2"/>
</dbReference>
<evidence type="ECO:0000255" key="1">
    <source>
        <dbReference type="PROSITE-ProRule" id="PRU00116"/>
    </source>
</evidence>
<proteinExistence type="evidence at protein level"/>
<sequence length="164" mass="19627">MRVRFCTKGNLILVIIEDVEESIEWKTLQKKKQQKIKEKLRIRTKAAVKIQAWWRGTLVRRTLLHAALRAWIIQCWWRMTLSRVLEKKRQAALIAYATRERAVIKLQSLVRMWRVRWRYCQVLNAIYIIQGHWQCHNCQTCALLQGHCVVTATHLQFHIEIINS</sequence>